<evidence type="ECO:0000255" key="1">
    <source>
        <dbReference type="PROSITE-ProRule" id="PRU00605"/>
    </source>
</evidence>
<accession>P49865</accession>
<accession>I6SYM3</accession>
<dbReference type="EMBL" id="CP003504">
    <property type="protein sequence ID" value="AFM70572.1"/>
    <property type="molecule type" value="Genomic_DNA"/>
</dbReference>
<dbReference type="EMBL" id="D17462">
    <property type="status" value="NOT_ANNOTATED_CDS"/>
    <property type="molecule type" value="Genomic_DNA"/>
</dbReference>
<dbReference type="RefSeq" id="WP_010738018.1">
    <property type="nucleotide sequence ID" value="NC_018081.1"/>
</dbReference>
<dbReference type="SMR" id="P49865"/>
<dbReference type="MEROPS" id="C26.965"/>
<dbReference type="KEGG" id="ehr:EHR_08225"/>
<dbReference type="eggNOG" id="COG2071">
    <property type="taxonomic scope" value="Bacteria"/>
</dbReference>
<dbReference type="HOGENOM" id="CLU_030756_2_1_9"/>
<dbReference type="OrthoDB" id="9813383at2"/>
<dbReference type="Proteomes" id="UP000002895">
    <property type="component" value="Chromosome"/>
</dbReference>
<dbReference type="GO" id="GO:0005829">
    <property type="term" value="C:cytosol"/>
    <property type="evidence" value="ECO:0007669"/>
    <property type="project" value="TreeGrafter"/>
</dbReference>
<dbReference type="GO" id="GO:0033969">
    <property type="term" value="F:gamma-glutamyl-gamma-aminobutyrate hydrolase activity"/>
    <property type="evidence" value="ECO:0007669"/>
    <property type="project" value="TreeGrafter"/>
</dbReference>
<dbReference type="GO" id="GO:0006598">
    <property type="term" value="P:polyamine catabolic process"/>
    <property type="evidence" value="ECO:0007669"/>
    <property type="project" value="TreeGrafter"/>
</dbReference>
<dbReference type="CDD" id="cd01745">
    <property type="entry name" value="GATase1_2"/>
    <property type="match status" value="1"/>
</dbReference>
<dbReference type="FunFam" id="3.40.50.880:FF:000030">
    <property type="entry name" value="Gamma-glutamyl-gamma-aminobutyrate hydrolase PuuD"/>
    <property type="match status" value="1"/>
</dbReference>
<dbReference type="Gene3D" id="3.40.50.880">
    <property type="match status" value="1"/>
</dbReference>
<dbReference type="InterPro" id="IPR029062">
    <property type="entry name" value="Class_I_gatase-like"/>
</dbReference>
<dbReference type="InterPro" id="IPR011697">
    <property type="entry name" value="Peptidase_C26"/>
</dbReference>
<dbReference type="InterPro" id="IPR044668">
    <property type="entry name" value="PuuD-like"/>
</dbReference>
<dbReference type="PANTHER" id="PTHR43235">
    <property type="entry name" value="GLUTAMINE AMIDOTRANSFERASE PB2B2.05-RELATED"/>
    <property type="match status" value="1"/>
</dbReference>
<dbReference type="PANTHER" id="PTHR43235:SF1">
    <property type="entry name" value="GLUTAMINE AMIDOTRANSFERASE PB2B2.05-RELATED"/>
    <property type="match status" value="1"/>
</dbReference>
<dbReference type="Pfam" id="PF07722">
    <property type="entry name" value="Peptidase_C26"/>
    <property type="match status" value="1"/>
</dbReference>
<dbReference type="SUPFAM" id="SSF52317">
    <property type="entry name" value="Class I glutamine amidotransferase-like"/>
    <property type="match status" value="1"/>
</dbReference>
<dbReference type="PROSITE" id="PS51273">
    <property type="entry name" value="GATASE_TYPE_1"/>
    <property type="match status" value="1"/>
</dbReference>
<proteinExistence type="predicted"/>
<keyword id="KW-0315">Glutamine amidotransferase</keyword>
<reference key="1">
    <citation type="journal article" date="2012" name="J. Bacteriol.">
        <title>Genome sequence of Enterococcus hirae (Streptococcus faecalis) ATCC 9790, a model organism for the study of ion transport, bioenergetics, and copper homeostasis.</title>
        <authorList>
            <person name="Gaechter T."/>
            <person name="Wunderlin C."/>
            <person name="Schmidheini T."/>
            <person name="Solioz M."/>
        </authorList>
    </citation>
    <scope>NUCLEOTIDE SEQUENCE [LARGE SCALE GENOMIC DNA]</scope>
    <source>
        <strain>ATCC 9790 / DSM 20160 / JCM 8729 / LMG 6399 / NBRC 3181 / NCIMB 6459 / NCDO 1258 / NCTC 12367 / WDCM 00089 / R</strain>
    </source>
</reference>
<reference key="2">
    <citation type="journal article" date="1994" name="J. Biol. Chem.">
        <title>Sequencing and characterization of the ntp gene cluster for vacuolar-type Na(+)-translocating ATPase of Enterococcus hirae.</title>
        <authorList>
            <person name="Takase K."/>
            <person name="Kakinuma S."/>
            <person name="Yamato I."/>
            <person name="Konishi K."/>
            <person name="Igarashi K."/>
            <person name="Kakinuma Y."/>
        </authorList>
    </citation>
    <scope>NUCLEOTIDE SEQUENCE [GENOMIC DNA] OF 1-42</scope>
    <source>
        <strain>ATCC 9790 / DSM 20160 / JCM 8729 / LMG 6399 / NBRC 3181 / NCIMB 6459 / NCDO 1258 / NCTC 12367 / WDCM 00089 / R</strain>
    </source>
</reference>
<protein>
    <recommendedName>
        <fullName>Protein NtpR</fullName>
    </recommendedName>
</protein>
<sequence>MLPIIGIAGNQLIRATDTFQGNQVTYTPQGFVNAVQQADGLPIVLPISSPKTASAYIDQIDKLILAGGQDISPQLYHEPPHPKLLETNLQRDLFEAALISEALKQNKPIFAVCRGMQLLNVVLGGSLYQDLTTYPKWSVKHEQHPTAPQFATHEVEILPDTLLYQLLPDTYLVNSYHHQALKELAPSLKATAFSPDGLVEGIESLDKDVRLFGVQWHPELTHSSNSTDQGLFDFFVQEF</sequence>
<feature type="chain" id="PRO_0000057975" description="Protein NtpR">
    <location>
        <begin position="1"/>
        <end position="239"/>
    </location>
</feature>
<feature type="domain" description="Glutamine amidotransferase type-1" evidence="1">
    <location>
        <begin position="12"/>
        <end position="239"/>
    </location>
</feature>
<feature type="active site" description="Nucleophile" evidence="1">
    <location>
        <position position="113"/>
    </location>
</feature>
<feature type="active site" evidence="1">
    <location>
        <position position="217"/>
    </location>
</feature>
<feature type="active site" evidence="1">
    <location>
        <position position="219"/>
    </location>
</feature>
<name>NTPR_ENTHA</name>
<organism>
    <name type="scientific">Enterococcus hirae (strain ATCC 9790 / DSM 20160 / JCM 8729 / LMG 6399 / NBRC 3181 / NCIMB 6459 / NCDO 1258 / NCTC 12367 / WDCM 00089 / R)</name>
    <dbReference type="NCBI Taxonomy" id="768486"/>
    <lineage>
        <taxon>Bacteria</taxon>
        <taxon>Bacillati</taxon>
        <taxon>Bacillota</taxon>
        <taxon>Bacilli</taxon>
        <taxon>Lactobacillales</taxon>
        <taxon>Enterococcaceae</taxon>
        <taxon>Enterococcus</taxon>
    </lineage>
</organism>
<gene>
    <name type="primary">ntpR</name>
    <name type="ordered locus">EHR_08225</name>
</gene>